<comment type="function">
    <text evidence="1">Catalyzes the reversible isomerization-deamination of glucosamine 6-phosphate (GlcN6P) to form fructose 6-phosphate (Fru6P) and ammonium ion.</text>
</comment>
<comment type="catalytic activity">
    <reaction evidence="1">
        <text>alpha-D-glucosamine 6-phosphate + H2O = beta-D-fructose 6-phosphate + NH4(+)</text>
        <dbReference type="Rhea" id="RHEA:12172"/>
        <dbReference type="ChEBI" id="CHEBI:15377"/>
        <dbReference type="ChEBI" id="CHEBI:28938"/>
        <dbReference type="ChEBI" id="CHEBI:57634"/>
        <dbReference type="ChEBI" id="CHEBI:75989"/>
        <dbReference type="EC" id="3.5.99.6"/>
    </reaction>
</comment>
<comment type="activity regulation">
    <text evidence="1">Allosterically activated by N-acetylglucosamine 6-phosphate (GlcNAc6P).</text>
</comment>
<comment type="pathway">
    <text evidence="1">Amino-sugar metabolism; N-acetylneuraminate degradation; D-fructose 6-phosphate from N-acetylneuraminate: step 5/5.</text>
</comment>
<comment type="subunit">
    <text evidence="1">Homohexamer.</text>
</comment>
<comment type="similarity">
    <text evidence="1">Belongs to the glucosamine/galactosamine-6-phosphate isomerase family. NagB subfamily.</text>
</comment>
<gene>
    <name evidence="1" type="primary">nagB</name>
    <name type="ordered locus">VVA0028</name>
</gene>
<feature type="chain" id="PRO_0000160187" description="Glucosamine-6-phosphate deaminase">
    <location>
        <begin position="1"/>
        <end position="266"/>
    </location>
</feature>
<feature type="active site" description="Proton acceptor; for enolization step" evidence="1">
    <location>
        <position position="72"/>
    </location>
</feature>
<feature type="active site" description="For ring-opening step" evidence="1">
    <location>
        <position position="141"/>
    </location>
</feature>
<feature type="active site" description="Proton acceptor; for ring-opening step" evidence="1">
    <location>
        <position position="143"/>
    </location>
</feature>
<feature type="active site" description="For ring-opening step" evidence="1">
    <location>
        <position position="148"/>
    </location>
</feature>
<feature type="site" description="Part of the allosteric site" evidence="1">
    <location>
        <position position="151"/>
    </location>
</feature>
<feature type="site" description="Part of the allosteric site" evidence="1">
    <location>
        <position position="158"/>
    </location>
</feature>
<feature type="site" description="Part of the allosteric site" evidence="1">
    <location>
        <position position="160"/>
    </location>
</feature>
<feature type="site" description="Part of the allosteric site" evidence="1">
    <location>
        <position position="161"/>
    </location>
</feature>
<feature type="site" description="Part of the allosteric site" evidence="1">
    <location>
        <position position="254"/>
    </location>
</feature>
<proteinExistence type="inferred from homology"/>
<accession>Q7MGE1</accession>
<organism>
    <name type="scientific">Vibrio vulnificus (strain YJ016)</name>
    <dbReference type="NCBI Taxonomy" id="196600"/>
    <lineage>
        <taxon>Bacteria</taxon>
        <taxon>Pseudomonadati</taxon>
        <taxon>Pseudomonadota</taxon>
        <taxon>Gammaproteobacteria</taxon>
        <taxon>Vibrionales</taxon>
        <taxon>Vibrionaceae</taxon>
        <taxon>Vibrio</taxon>
    </lineage>
</organism>
<protein>
    <recommendedName>
        <fullName evidence="1">Glucosamine-6-phosphate deaminase</fullName>
        <ecNumber evidence="1">3.5.99.6</ecNumber>
    </recommendedName>
    <alternativeName>
        <fullName evidence="1">GlcN6P deaminase</fullName>
        <shortName evidence="1">GNPDA</shortName>
    </alternativeName>
    <alternativeName>
        <fullName evidence="1">Glucosamine-6-phosphate isomerase</fullName>
    </alternativeName>
</protein>
<keyword id="KW-0021">Allosteric enzyme</keyword>
<keyword id="KW-0119">Carbohydrate metabolism</keyword>
<keyword id="KW-0378">Hydrolase</keyword>
<sequence>MRLIPLKTAAQVGKWAAAHIAKRINDFQPTAERPFVLGLPTGGTPLATYKALIELYQEGKVSFKHVVTFNMDEYVGISADHPESYRSFMYNNFFNHIDIQEENINLLNGNAEDHEAECQRYEDKIKSYGRINLFMGGVGNDGHIAFNEPASSLSSRTRIKTLTEDTRIANSRFFDGDINQVPKYALTIGVGTLLDSQEIMILVTGHNKALALEAAVEGSVNHLWTVSALQLHPKSVIVCDEPSTQELKVKTVKYFTELEAKNIVGF</sequence>
<name>NAGB_VIBVY</name>
<dbReference type="EC" id="3.5.99.6" evidence="1"/>
<dbReference type="EMBL" id="BA000038">
    <property type="protein sequence ID" value="BAC96054.1"/>
    <property type="molecule type" value="Genomic_DNA"/>
</dbReference>
<dbReference type="RefSeq" id="WP_011082093.1">
    <property type="nucleotide sequence ID" value="NC_005140.1"/>
</dbReference>
<dbReference type="SMR" id="Q7MGE1"/>
<dbReference type="STRING" id="672.VV93_v1c30360"/>
<dbReference type="GeneID" id="93897296"/>
<dbReference type="KEGG" id="vvy:VVA0028"/>
<dbReference type="eggNOG" id="COG0363">
    <property type="taxonomic scope" value="Bacteria"/>
</dbReference>
<dbReference type="HOGENOM" id="CLU_049611_0_1_6"/>
<dbReference type="UniPathway" id="UPA00629">
    <property type="reaction ID" value="UER00684"/>
</dbReference>
<dbReference type="Proteomes" id="UP000002675">
    <property type="component" value="Chromosome II"/>
</dbReference>
<dbReference type="GO" id="GO:0005737">
    <property type="term" value="C:cytoplasm"/>
    <property type="evidence" value="ECO:0007669"/>
    <property type="project" value="TreeGrafter"/>
</dbReference>
<dbReference type="GO" id="GO:0004342">
    <property type="term" value="F:glucosamine-6-phosphate deaminase activity"/>
    <property type="evidence" value="ECO:0007669"/>
    <property type="project" value="UniProtKB-UniRule"/>
</dbReference>
<dbReference type="GO" id="GO:0042802">
    <property type="term" value="F:identical protein binding"/>
    <property type="evidence" value="ECO:0007669"/>
    <property type="project" value="TreeGrafter"/>
</dbReference>
<dbReference type="GO" id="GO:0005975">
    <property type="term" value="P:carbohydrate metabolic process"/>
    <property type="evidence" value="ECO:0007669"/>
    <property type="project" value="InterPro"/>
</dbReference>
<dbReference type="GO" id="GO:0006043">
    <property type="term" value="P:glucosamine catabolic process"/>
    <property type="evidence" value="ECO:0007669"/>
    <property type="project" value="TreeGrafter"/>
</dbReference>
<dbReference type="GO" id="GO:0006046">
    <property type="term" value="P:N-acetylglucosamine catabolic process"/>
    <property type="evidence" value="ECO:0007669"/>
    <property type="project" value="TreeGrafter"/>
</dbReference>
<dbReference type="GO" id="GO:0019262">
    <property type="term" value="P:N-acetylneuraminate catabolic process"/>
    <property type="evidence" value="ECO:0007669"/>
    <property type="project" value="UniProtKB-UniRule"/>
</dbReference>
<dbReference type="CDD" id="cd01399">
    <property type="entry name" value="GlcN6P_deaminase"/>
    <property type="match status" value="1"/>
</dbReference>
<dbReference type="FunFam" id="3.40.50.1360:FF:000002">
    <property type="entry name" value="Glucosamine-6-phosphate deaminase"/>
    <property type="match status" value="1"/>
</dbReference>
<dbReference type="Gene3D" id="3.40.50.1360">
    <property type="match status" value="1"/>
</dbReference>
<dbReference type="HAMAP" id="MF_01241">
    <property type="entry name" value="GlcN6P_deamin"/>
    <property type="match status" value="1"/>
</dbReference>
<dbReference type="InterPro" id="IPR006148">
    <property type="entry name" value="Glc/Gal-6P_isomerase"/>
</dbReference>
<dbReference type="InterPro" id="IPR004547">
    <property type="entry name" value="Glucosamine6P_isomerase"/>
</dbReference>
<dbReference type="InterPro" id="IPR018321">
    <property type="entry name" value="Glucosamine6P_isomerase_CS"/>
</dbReference>
<dbReference type="InterPro" id="IPR037171">
    <property type="entry name" value="NagB/RpiA_transferase-like"/>
</dbReference>
<dbReference type="NCBIfam" id="TIGR00502">
    <property type="entry name" value="nagB"/>
    <property type="match status" value="1"/>
</dbReference>
<dbReference type="NCBIfam" id="NF001685">
    <property type="entry name" value="PRK00443.1-5"/>
    <property type="match status" value="1"/>
</dbReference>
<dbReference type="PANTHER" id="PTHR11280">
    <property type="entry name" value="GLUCOSAMINE-6-PHOSPHATE ISOMERASE"/>
    <property type="match status" value="1"/>
</dbReference>
<dbReference type="PANTHER" id="PTHR11280:SF5">
    <property type="entry name" value="GLUCOSAMINE-6-PHOSPHATE ISOMERASE"/>
    <property type="match status" value="1"/>
</dbReference>
<dbReference type="Pfam" id="PF01182">
    <property type="entry name" value="Glucosamine_iso"/>
    <property type="match status" value="1"/>
</dbReference>
<dbReference type="SUPFAM" id="SSF100950">
    <property type="entry name" value="NagB/RpiA/CoA transferase-like"/>
    <property type="match status" value="1"/>
</dbReference>
<dbReference type="PROSITE" id="PS01161">
    <property type="entry name" value="GLC_GALNAC_ISOMERASE"/>
    <property type="match status" value="1"/>
</dbReference>
<reference key="1">
    <citation type="journal article" date="2003" name="Genome Res.">
        <title>Comparative genome analysis of Vibrio vulnificus, a marine pathogen.</title>
        <authorList>
            <person name="Chen C.-Y."/>
            <person name="Wu K.-M."/>
            <person name="Chang Y.-C."/>
            <person name="Chang C.-H."/>
            <person name="Tsai H.-C."/>
            <person name="Liao T.-L."/>
            <person name="Liu Y.-M."/>
            <person name="Chen H.-J."/>
            <person name="Shen A.B.-T."/>
            <person name="Li J.-C."/>
            <person name="Su T.-L."/>
            <person name="Shao C.-P."/>
            <person name="Lee C.-T."/>
            <person name="Hor L.-I."/>
            <person name="Tsai S.-F."/>
        </authorList>
    </citation>
    <scope>NUCLEOTIDE SEQUENCE [LARGE SCALE GENOMIC DNA]</scope>
    <source>
        <strain>YJ016</strain>
    </source>
</reference>
<evidence type="ECO:0000255" key="1">
    <source>
        <dbReference type="HAMAP-Rule" id="MF_01241"/>
    </source>
</evidence>